<comment type="function">
    <text evidence="2">Regulates the transcription of the pyrimidine nucleotide (pyr) operon in response to exogenous pyrimidines.</text>
</comment>
<comment type="function">
    <text evidence="2">Also displays a weak uracil phosphoribosyltransferase activity which is not physiologically significant.</text>
</comment>
<comment type="catalytic activity">
    <reaction evidence="2">
        <text>UMP + diphosphate = 5-phospho-alpha-D-ribose 1-diphosphate + uracil</text>
        <dbReference type="Rhea" id="RHEA:13017"/>
        <dbReference type="ChEBI" id="CHEBI:17568"/>
        <dbReference type="ChEBI" id="CHEBI:33019"/>
        <dbReference type="ChEBI" id="CHEBI:57865"/>
        <dbReference type="ChEBI" id="CHEBI:58017"/>
        <dbReference type="EC" id="2.4.2.9"/>
    </reaction>
</comment>
<comment type="similarity">
    <text evidence="2">Belongs to the purine/pyrimidine phosphoribosyltransferase family. PyrR subfamily.</text>
</comment>
<evidence type="ECO:0000250" key="1"/>
<evidence type="ECO:0000255" key="2">
    <source>
        <dbReference type="HAMAP-Rule" id="MF_01219"/>
    </source>
</evidence>
<organism>
    <name type="scientific">Mycobacterium tuberculosis (strain CDC 1551 / Oshkosh)</name>
    <dbReference type="NCBI Taxonomy" id="83331"/>
    <lineage>
        <taxon>Bacteria</taxon>
        <taxon>Bacillati</taxon>
        <taxon>Actinomycetota</taxon>
        <taxon>Actinomycetes</taxon>
        <taxon>Mycobacteriales</taxon>
        <taxon>Mycobacteriaceae</taxon>
        <taxon>Mycobacterium</taxon>
        <taxon>Mycobacterium tuberculosis complex</taxon>
    </lineage>
</organism>
<gene>
    <name evidence="2" type="primary">pyrR</name>
    <name type="ordered locus">MT1423</name>
</gene>
<sequence>MGAAGDAAIGRESRELMSAADVGRTISRIAHQIIEKTALDDPVGPDAPRVVLLGIPTRGVTLANRLAGNITEYSGIHVGHGALDITLYRDDLMIKPPRPLASTSIPAGGIDDALVILVDDVLYSGRSVRSALDALRDVGRPRAVQLAVLVDRGHRELPLRADYVGKNVPTSRSESVHVRLREHDGRDGVVISR</sequence>
<accession>P9WHK2</accession>
<accession>L0T9G5</accession>
<accession>P65941</accession>
<accession>P71807</accession>
<reference key="1">
    <citation type="journal article" date="2002" name="J. Bacteriol.">
        <title>Whole-genome comparison of Mycobacterium tuberculosis clinical and laboratory strains.</title>
        <authorList>
            <person name="Fleischmann R.D."/>
            <person name="Alland D."/>
            <person name="Eisen J.A."/>
            <person name="Carpenter L."/>
            <person name="White O."/>
            <person name="Peterson J.D."/>
            <person name="DeBoy R.T."/>
            <person name="Dodson R.J."/>
            <person name="Gwinn M.L."/>
            <person name="Haft D.H."/>
            <person name="Hickey E.K."/>
            <person name="Kolonay J.F."/>
            <person name="Nelson W.C."/>
            <person name="Umayam L.A."/>
            <person name="Ermolaeva M.D."/>
            <person name="Salzberg S.L."/>
            <person name="Delcher A."/>
            <person name="Utterback T.R."/>
            <person name="Weidman J.F."/>
            <person name="Khouri H.M."/>
            <person name="Gill J."/>
            <person name="Mikula A."/>
            <person name="Bishai W."/>
            <person name="Jacobs W.R. Jr."/>
            <person name="Venter J.C."/>
            <person name="Fraser C.M."/>
        </authorList>
    </citation>
    <scope>NUCLEOTIDE SEQUENCE [LARGE SCALE GENOMIC DNA]</scope>
    <source>
        <strain>CDC 1551 / Oshkosh</strain>
    </source>
</reference>
<name>PYRR_MYCTO</name>
<proteinExistence type="inferred from homology"/>
<protein>
    <recommendedName>
        <fullName evidence="2">Bifunctional protein PyrR</fullName>
    </recommendedName>
    <domain>
        <recommendedName>
            <fullName evidence="2">Pyrimidine operon regulatory protein</fullName>
        </recommendedName>
    </domain>
    <domain>
        <recommendedName>
            <fullName evidence="2">Uracil phosphoribosyltransferase</fullName>
            <shortName evidence="2">UPRTase</shortName>
            <ecNumber evidence="2">2.4.2.9</ecNumber>
        </recommendedName>
    </domain>
</protein>
<keyword id="KW-0328">Glycosyltransferase</keyword>
<keyword id="KW-1185">Reference proteome</keyword>
<keyword id="KW-0804">Transcription</keyword>
<keyword id="KW-0805">Transcription regulation</keyword>
<keyword id="KW-0808">Transferase</keyword>
<dbReference type="EC" id="2.4.2.9" evidence="2"/>
<dbReference type="EMBL" id="AE000516">
    <property type="protein sequence ID" value="AAK45688.1"/>
    <property type="molecule type" value="Genomic_DNA"/>
</dbReference>
<dbReference type="PIR" id="H70958">
    <property type="entry name" value="H70958"/>
</dbReference>
<dbReference type="RefSeq" id="WP_003407196.1">
    <property type="nucleotide sequence ID" value="NZ_KK341227.1"/>
</dbReference>
<dbReference type="SMR" id="P9WHK2"/>
<dbReference type="KEGG" id="mtc:MT1423"/>
<dbReference type="PATRIC" id="fig|83331.31.peg.1529"/>
<dbReference type="HOGENOM" id="CLU_094234_2_1_11"/>
<dbReference type="Proteomes" id="UP000001020">
    <property type="component" value="Chromosome"/>
</dbReference>
<dbReference type="GO" id="GO:0004845">
    <property type="term" value="F:uracil phosphoribosyltransferase activity"/>
    <property type="evidence" value="ECO:0007669"/>
    <property type="project" value="UniProtKB-UniRule"/>
</dbReference>
<dbReference type="GO" id="GO:0006355">
    <property type="term" value="P:regulation of DNA-templated transcription"/>
    <property type="evidence" value="ECO:0007669"/>
    <property type="project" value="UniProtKB-UniRule"/>
</dbReference>
<dbReference type="CDD" id="cd06223">
    <property type="entry name" value="PRTases_typeI"/>
    <property type="match status" value="1"/>
</dbReference>
<dbReference type="FunFam" id="3.40.50.2020:FF:000020">
    <property type="entry name" value="Bifunctional protein PyrR"/>
    <property type="match status" value="1"/>
</dbReference>
<dbReference type="Gene3D" id="3.40.50.2020">
    <property type="match status" value="1"/>
</dbReference>
<dbReference type="HAMAP" id="MF_01219">
    <property type="entry name" value="PyrR"/>
    <property type="match status" value="1"/>
</dbReference>
<dbReference type="InterPro" id="IPR000836">
    <property type="entry name" value="PRibTrfase_dom"/>
</dbReference>
<dbReference type="InterPro" id="IPR029057">
    <property type="entry name" value="PRTase-like"/>
</dbReference>
<dbReference type="InterPro" id="IPR023050">
    <property type="entry name" value="PyrR"/>
</dbReference>
<dbReference type="InterPro" id="IPR050137">
    <property type="entry name" value="PyrR_bifunctional"/>
</dbReference>
<dbReference type="NCBIfam" id="NF003547">
    <property type="entry name" value="PRK05205.1-3"/>
    <property type="match status" value="1"/>
</dbReference>
<dbReference type="NCBIfam" id="NF003549">
    <property type="entry name" value="PRK05205.1-5"/>
    <property type="match status" value="1"/>
</dbReference>
<dbReference type="PANTHER" id="PTHR11608">
    <property type="entry name" value="BIFUNCTIONAL PROTEIN PYRR"/>
    <property type="match status" value="1"/>
</dbReference>
<dbReference type="PANTHER" id="PTHR11608:SF0">
    <property type="entry name" value="BIFUNCTIONAL PROTEIN PYRR"/>
    <property type="match status" value="1"/>
</dbReference>
<dbReference type="Pfam" id="PF00156">
    <property type="entry name" value="Pribosyltran"/>
    <property type="match status" value="1"/>
</dbReference>
<dbReference type="SUPFAM" id="SSF53271">
    <property type="entry name" value="PRTase-like"/>
    <property type="match status" value="1"/>
</dbReference>
<feature type="chain" id="PRO_0000428170" description="Bifunctional protein PyrR">
    <location>
        <begin position="1"/>
        <end position="193"/>
    </location>
</feature>
<feature type="short sequence motif" description="PRPP-binding" evidence="2">
    <location>
        <begin position="115"/>
        <end position="127"/>
    </location>
</feature>
<feature type="binding site" description="in other chain" evidence="1">
    <location>
        <begin position="57"/>
        <end position="58"/>
    </location>
    <ligand>
        <name>substrate</name>
        <note>ligand shared between dimeric partners</note>
    </ligand>
</feature>
<feature type="binding site" evidence="1">
    <location>
        <position position="98"/>
    </location>
    <ligand>
        <name>substrate</name>
        <note>ligand shared between dimeric partners</note>
    </ligand>
</feature>
<feature type="binding site" description="in other chain" evidence="1">
    <location>
        <begin position="119"/>
        <end position="127"/>
    </location>
    <ligand>
        <name>substrate</name>
        <note>ligand shared between dimeric partners</note>
    </ligand>
</feature>
<feature type="binding site" description="in other chain" evidence="1">
    <location>
        <position position="152"/>
    </location>
    <ligand>
        <name>substrate</name>
        <note>ligand shared between dimeric partners</note>
    </ligand>
</feature>
<feature type="binding site" description="in other chain" evidence="1">
    <location>
        <position position="176"/>
    </location>
    <ligand>
        <name>substrate</name>
        <note>ligand shared between dimeric partners</note>
    </ligand>
</feature>